<reference key="1">
    <citation type="journal article" date="1995" name="Science">
        <title>Whole-genome random sequencing and assembly of Haemophilus influenzae Rd.</title>
        <authorList>
            <person name="Fleischmann R.D."/>
            <person name="Adams M.D."/>
            <person name="White O."/>
            <person name="Clayton R.A."/>
            <person name="Kirkness E.F."/>
            <person name="Kerlavage A.R."/>
            <person name="Bult C.J."/>
            <person name="Tomb J.-F."/>
            <person name="Dougherty B.A."/>
            <person name="Merrick J.M."/>
            <person name="McKenney K."/>
            <person name="Sutton G.G."/>
            <person name="FitzHugh W."/>
            <person name="Fields C.A."/>
            <person name="Gocayne J.D."/>
            <person name="Scott J.D."/>
            <person name="Shirley R."/>
            <person name="Liu L.-I."/>
            <person name="Glodek A."/>
            <person name="Kelley J.M."/>
            <person name="Weidman J.F."/>
            <person name="Phillips C.A."/>
            <person name="Spriggs T."/>
            <person name="Hedblom E."/>
            <person name="Cotton M.D."/>
            <person name="Utterback T.R."/>
            <person name="Hanna M.C."/>
            <person name="Nguyen D.T."/>
            <person name="Saudek D.M."/>
            <person name="Brandon R.C."/>
            <person name="Fine L.D."/>
            <person name="Fritchman J.L."/>
            <person name="Fuhrmann J.L."/>
            <person name="Geoghagen N.S.M."/>
            <person name="Gnehm C.L."/>
            <person name="McDonald L.A."/>
            <person name="Small K.V."/>
            <person name="Fraser C.M."/>
            <person name="Smith H.O."/>
            <person name="Venter J.C."/>
        </authorList>
    </citation>
    <scope>NUCLEOTIDE SEQUENCE [LARGE SCALE GENOMIC DNA]</scope>
    <source>
        <strain>ATCC 51907 / DSM 11121 / KW20 / Rd</strain>
    </source>
</reference>
<protein>
    <recommendedName>
        <fullName evidence="1">5-oxoprolinase subunit B</fullName>
        <shortName evidence="1">5-OPase subunit B</shortName>
        <ecNumber evidence="1">3.5.2.9</ecNumber>
    </recommendedName>
    <alternativeName>
        <fullName evidence="1">5-oxoprolinase (ATP-hydrolyzing) subunit B</fullName>
    </alternativeName>
</protein>
<proteinExistence type="inferred from homology"/>
<comment type="function">
    <text evidence="1">Catalyzes the cleavage of 5-oxoproline to form L-glutamate coupled to the hydrolysis of ATP to ADP and inorganic phosphate.</text>
</comment>
<comment type="catalytic activity">
    <reaction evidence="1">
        <text>5-oxo-L-proline + ATP + 2 H2O = L-glutamate + ADP + phosphate + H(+)</text>
        <dbReference type="Rhea" id="RHEA:10348"/>
        <dbReference type="ChEBI" id="CHEBI:15377"/>
        <dbReference type="ChEBI" id="CHEBI:15378"/>
        <dbReference type="ChEBI" id="CHEBI:29985"/>
        <dbReference type="ChEBI" id="CHEBI:30616"/>
        <dbReference type="ChEBI" id="CHEBI:43474"/>
        <dbReference type="ChEBI" id="CHEBI:58402"/>
        <dbReference type="ChEBI" id="CHEBI:456216"/>
        <dbReference type="EC" id="3.5.2.9"/>
    </reaction>
</comment>
<comment type="subunit">
    <text evidence="2">Forms a complex composed of PxpA, PxpB and PxpC.</text>
</comment>
<comment type="similarity">
    <text evidence="3">Belongs to the PxpB family.</text>
</comment>
<name>PXPB_HAEIN</name>
<dbReference type="EC" id="3.5.2.9" evidence="1"/>
<dbReference type="EMBL" id="L42023">
    <property type="protein sequence ID" value="AAC23377.1"/>
    <property type="molecule type" value="Genomic_DNA"/>
</dbReference>
<dbReference type="PIR" id="C64041">
    <property type="entry name" value="C64041"/>
</dbReference>
<dbReference type="RefSeq" id="NP_439872.1">
    <property type="nucleotide sequence ID" value="NC_000907.1"/>
</dbReference>
<dbReference type="SMR" id="P44299"/>
<dbReference type="STRING" id="71421.HI_1731"/>
<dbReference type="EnsemblBacteria" id="AAC23377">
    <property type="protein sequence ID" value="AAC23377"/>
    <property type="gene ID" value="HI_1731"/>
</dbReference>
<dbReference type="KEGG" id="hin:HI_1731"/>
<dbReference type="PATRIC" id="fig|71421.8.peg.1810"/>
<dbReference type="eggNOG" id="COG2049">
    <property type="taxonomic scope" value="Bacteria"/>
</dbReference>
<dbReference type="HOGENOM" id="CLU_020207_0_0_6"/>
<dbReference type="OrthoDB" id="9778567at2"/>
<dbReference type="PhylomeDB" id="P44299"/>
<dbReference type="BioCyc" id="HINF71421:G1GJ1-1746-MONOMER"/>
<dbReference type="Proteomes" id="UP000000579">
    <property type="component" value="Chromosome"/>
</dbReference>
<dbReference type="GO" id="GO:0017168">
    <property type="term" value="F:5-oxoprolinase (ATP-hydrolyzing) activity"/>
    <property type="evidence" value="ECO:0007669"/>
    <property type="project" value="UniProtKB-EC"/>
</dbReference>
<dbReference type="GO" id="GO:0005524">
    <property type="term" value="F:ATP binding"/>
    <property type="evidence" value="ECO:0007669"/>
    <property type="project" value="UniProtKB-KW"/>
</dbReference>
<dbReference type="Gene3D" id="3.30.1360.40">
    <property type="match status" value="1"/>
</dbReference>
<dbReference type="Gene3D" id="2.40.100.10">
    <property type="entry name" value="Cyclophilin-like"/>
    <property type="match status" value="1"/>
</dbReference>
<dbReference type="InterPro" id="IPR003833">
    <property type="entry name" value="CT_C_D"/>
</dbReference>
<dbReference type="InterPro" id="IPR029000">
    <property type="entry name" value="Cyclophilin-like_dom_sf"/>
</dbReference>
<dbReference type="InterPro" id="IPR010016">
    <property type="entry name" value="PxpB"/>
</dbReference>
<dbReference type="NCBIfam" id="TIGR00370">
    <property type="entry name" value="5-oxoprolinase subunit PxpB"/>
    <property type="match status" value="1"/>
</dbReference>
<dbReference type="PANTHER" id="PTHR34698">
    <property type="entry name" value="5-OXOPROLINASE SUBUNIT B"/>
    <property type="match status" value="1"/>
</dbReference>
<dbReference type="PANTHER" id="PTHR34698:SF2">
    <property type="entry name" value="5-OXOPROLINASE SUBUNIT B"/>
    <property type="match status" value="1"/>
</dbReference>
<dbReference type="Pfam" id="PF02682">
    <property type="entry name" value="CT_C_D"/>
    <property type="match status" value="1"/>
</dbReference>
<dbReference type="SMART" id="SM00796">
    <property type="entry name" value="AHS1"/>
    <property type="match status" value="1"/>
</dbReference>
<dbReference type="SUPFAM" id="SSF50891">
    <property type="entry name" value="Cyclophilin-like"/>
    <property type="match status" value="1"/>
</dbReference>
<dbReference type="SUPFAM" id="SSF160467">
    <property type="entry name" value="PH0987 N-terminal domain-like"/>
    <property type="match status" value="1"/>
</dbReference>
<feature type="chain" id="PRO_0000168708" description="5-oxoprolinase subunit B">
    <location>
        <begin position="1"/>
        <end position="213"/>
    </location>
</feature>
<evidence type="ECO:0000250" key="1">
    <source>
        <dbReference type="UniProtKB" id="P0AAV4"/>
    </source>
</evidence>
<evidence type="ECO:0000250" key="2">
    <source>
        <dbReference type="UniProtKB" id="P60495"/>
    </source>
</evidence>
<evidence type="ECO:0000305" key="3"/>
<accession>P44299</accession>
<keyword id="KW-0067">ATP-binding</keyword>
<keyword id="KW-0378">Hydrolase</keyword>
<keyword id="KW-0547">Nucleotide-binding</keyword>
<keyword id="KW-1185">Reference proteome</keyword>
<organism>
    <name type="scientific">Haemophilus influenzae (strain ATCC 51907 / DSM 11121 / KW20 / Rd)</name>
    <dbReference type="NCBI Taxonomy" id="71421"/>
    <lineage>
        <taxon>Bacteria</taxon>
        <taxon>Pseudomonadati</taxon>
        <taxon>Pseudomonadota</taxon>
        <taxon>Gammaproteobacteria</taxon>
        <taxon>Pasteurellales</taxon>
        <taxon>Pasteurellaceae</taxon>
        <taxon>Haemophilus</taxon>
    </lineage>
</organism>
<gene>
    <name evidence="1" type="primary">pxpB</name>
    <name type="ordered locus">HI_1731</name>
</gene>
<sequence length="213" mass="23641">MNIVPISESAVVCSLPPPASIQQQRQLWAFARQLQSEQDIVEVVLGMNNLTVFTDFFVDFKPLVQRLEQLWAELKVSDFQGRHIEIPVIYGGERGQDLSDVAKFHQTTPERIIQMHSEPIYTVYMIGFQAGFPYLGGLPENLHTPRRATPRTVVPAGSVGIGGAQTGIYPFSSPGGWQLIGYTKQALFDKNQAQPTLLQAGDTVKFIVEGIEL</sequence>